<dbReference type="EC" id="7.1.1.2"/>
<dbReference type="EMBL" id="X03240">
    <property type="protein sequence ID" value="CAA26995.1"/>
    <property type="molecule type" value="Genomic_DNA"/>
</dbReference>
<dbReference type="PIR" id="B30020">
    <property type="entry name" value="B30020"/>
</dbReference>
<dbReference type="RefSeq" id="NP_006912.1">
    <property type="nucleotide sequence ID" value="NC_001322.1"/>
</dbReference>
<dbReference type="SMR" id="P07709"/>
<dbReference type="EnsemblMetazoa" id="GeneID_807629_df_mr">
    <property type="protein sequence ID" value="NP_006912.1"/>
    <property type="gene ID" value="GeneID_807629"/>
</dbReference>
<dbReference type="GeneID" id="807629"/>
<dbReference type="KEGG" id="dya:ND6"/>
<dbReference type="CTD" id="4541"/>
<dbReference type="OrthoDB" id="6377199at2759"/>
<dbReference type="Proteomes" id="UP000002282">
    <property type="component" value="Mitochondrion"/>
</dbReference>
<dbReference type="GO" id="GO:0031966">
    <property type="term" value="C:mitochondrial membrane"/>
    <property type="evidence" value="ECO:0007669"/>
    <property type="project" value="UniProtKB-SubCell"/>
</dbReference>
<dbReference type="GO" id="GO:0045271">
    <property type="term" value="C:respiratory chain complex I"/>
    <property type="evidence" value="ECO:0007669"/>
    <property type="project" value="EnsemblMetazoa"/>
</dbReference>
<dbReference type="GO" id="GO:0008137">
    <property type="term" value="F:NADH dehydrogenase (ubiquinone) activity"/>
    <property type="evidence" value="ECO:0007669"/>
    <property type="project" value="UniProtKB-EC"/>
</dbReference>
<dbReference type="InterPro" id="IPR050269">
    <property type="entry name" value="ComplexI_Subunit6"/>
</dbReference>
<dbReference type="InterPro" id="IPR001457">
    <property type="entry name" value="NADH_UbQ/plastoQ_OxRdtase_su6"/>
</dbReference>
<dbReference type="PANTHER" id="PTHR11435">
    <property type="entry name" value="NADH UBIQUINONE OXIDOREDUCTASE SUBUNIT ND6"/>
    <property type="match status" value="1"/>
</dbReference>
<dbReference type="PANTHER" id="PTHR11435:SF1">
    <property type="entry name" value="NADH-UBIQUINONE OXIDOREDUCTASE CHAIN 6"/>
    <property type="match status" value="1"/>
</dbReference>
<dbReference type="Pfam" id="PF00499">
    <property type="entry name" value="Oxidored_q3"/>
    <property type="match status" value="1"/>
</dbReference>
<name>NU6M_DROYA</name>
<sequence>MIQLMLYSLIITTSIIFFNMIHPLALGLTLLIQTIFVCLLSGLMTKSFWYSYILFLIFLGGMLVLFIYVTSLASNEMFNLSIKLTLFSMFILFFMFILSMILDKTSITLFLMNNEMQSIIEMNSYFTENSLSLNKLYNFPTNFVTILLMNYLLITLIVVVKITKLFKGPIRMMS</sequence>
<proteinExistence type="inferred from homology"/>
<feature type="chain" id="PRO_0000118279" description="NADH-ubiquinone oxidoreductase chain 6">
    <location>
        <begin position="1"/>
        <end position="174"/>
    </location>
</feature>
<feature type="transmembrane region" description="Helical" evidence="2">
    <location>
        <begin position="24"/>
        <end position="44"/>
    </location>
</feature>
<feature type="transmembrane region" description="Helical" evidence="2">
    <location>
        <begin position="53"/>
        <end position="73"/>
    </location>
</feature>
<feature type="transmembrane region" description="Helical" evidence="2">
    <location>
        <begin position="82"/>
        <end position="102"/>
    </location>
</feature>
<feature type="transmembrane region" description="Helical" evidence="2">
    <location>
        <begin position="143"/>
        <end position="163"/>
    </location>
</feature>
<comment type="function">
    <text evidence="1">Core subunit of the mitochondrial membrane respiratory chain NADH dehydrogenase (Complex I) that is believed to belong to the minimal assembly required for catalysis. Complex I functions in the transfer of electrons from NADH to the respiratory chain. The immediate electron acceptor for the enzyme is believed to be ubiquinone (By similarity).</text>
</comment>
<comment type="catalytic activity">
    <reaction>
        <text>a ubiquinone + NADH + 5 H(+)(in) = a ubiquinol + NAD(+) + 4 H(+)(out)</text>
        <dbReference type="Rhea" id="RHEA:29091"/>
        <dbReference type="Rhea" id="RHEA-COMP:9565"/>
        <dbReference type="Rhea" id="RHEA-COMP:9566"/>
        <dbReference type="ChEBI" id="CHEBI:15378"/>
        <dbReference type="ChEBI" id="CHEBI:16389"/>
        <dbReference type="ChEBI" id="CHEBI:17976"/>
        <dbReference type="ChEBI" id="CHEBI:57540"/>
        <dbReference type="ChEBI" id="CHEBI:57945"/>
        <dbReference type="EC" id="7.1.1.2"/>
    </reaction>
</comment>
<comment type="subcellular location">
    <subcellularLocation>
        <location evidence="3">Mitochondrion membrane</location>
        <topology evidence="3">Multi-pass membrane protein</topology>
    </subcellularLocation>
</comment>
<comment type="similarity">
    <text evidence="3">Belongs to the complex I subunit 6 family.</text>
</comment>
<gene>
    <name type="primary">mt:ND6</name>
    <name type="synonym">ND6</name>
</gene>
<accession>P07709</accession>
<reference key="1">
    <citation type="journal article" date="1984" name="Nucleic Acids Res.">
        <title>Sequence and arrangement of the genes for cytochrome b, URF1, URF4L, URF4, URF5, URF6 and five tRNAs in Drosophila mitochondrial DNA.</title>
        <authorList>
            <person name="Clary D.O."/>
            <person name="Wahleithner J.A."/>
            <person name="Wolstenholme D.R."/>
        </authorList>
    </citation>
    <scope>NUCLEOTIDE SEQUENCE [GENOMIC DNA]</scope>
</reference>
<reference key="2">
    <citation type="journal article" date="1985" name="J. Mol. Evol.">
        <title>The mitochondrial DNA molecular of Drosophila yakuba: nucleotide sequence, gene organization, and genetic code.</title>
        <authorList>
            <person name="Clary D.O."/>
            <person name="Wolstenholme D.R."/>
        </authorList>
    </citation>
    <scope>NUCLEOTIDE SEQUENCE [LARGE SCALE GENOMIC DNA]</scope>
    <source>
        <strain>2317.6 Ivory Coast</strain>
    </source>
</reference>
<protein>
    <recommendedName>
        <fullName>NADH-ubiquinone oxidoreductase chain 6</fullName>
        <ecNumber>7.1.1.2</ecNumber>
    </recommendedName>
    <alternativeName>
        <fullName>NADH dehydrogenase subunit 6</fullName>
    </alternativeName>
</protein>
<organism>
    <name type="scientific">Drosophila yakuba</name>
    <name type="common">Fruit fly</name>
    <dbReference type="NCBI Taxonomy" id="7245"/>
    <lineage>
        <taxon>Eukaryota</taxon>
        <taxon>Metazoa</taxon>
        <taxon>Ecdysozoa</taxon>
        <taxon>Arthropoda</taxon>
        <taxon>Hexapoda</taxon>
        <taxon>Insecta</taxon>
        <taxon>Pterygota</taxon>
        <taxon>Neoptera</taxon>
        <taxon>Endopterygota</taxon>
        <taxon>Diptera</taxon>
        <taxon>Brachycera</taxon>
        <taxon>Muscomorpha</taxon>
        <taxon>Ephydroidea</taxon>
        <taxon>Drosophilidae</taxon>
        <taxon>Drosophila</taxon>
        <taxon>Sophophora</taxon>
    </lineage>
</organism>
<geneLocation type="mitochondrion"/>
<keyword id="KW-0249">Electron transport</keyword>
<keyword id="KW-0472">Membrane</keyword>
<keyword id="KW-0496">Mitochondrion</keyword>
<keyword id="KW-0520">NAD</keyword>
<keyword id="KW-0679">Respiratory chain</keyword>
<keyword id="KW-1278">Translocase</keyword>
<keyword id="KW-0812">Transmembrane</keyword>
<keyword id="KW-1133">Transmembrane helix</keyword>
<keyword id="KW-0813">Transport</keyword>
<keyword id="KW-0830">Ubiquinone</keyword>
<evidence type="ECO:0000250" key="1"/>
<evidence type="ECO:0000255" key="2"/>
<evidence type="ECO:0000305" key="3"/>